<sequence length="190" mass="20690">MKAESGSADAKLPLPPPVGRKRRGLAILDFLLRLLAIGATLSAAIAMGTNNETLKFFTQFFQFNARFYNLSAFIYFVIANATVGLYLLLSLPFSIFDIVRPRAAAFRVLLIFFDTVMVAVCTSGAAAATAIMYVARRGNTKTNWFSICQQFNSFCDQATGALGASFAAVVLLILLVLLSASTLHRQRADF</sequence>
<keyword id="KW-1003">Cell membrane</keyword>
<keyword id="KW-0961">Cell wall biogenesis/degradation</keyword>
<keyword id="KW-0325">Glycoprotein</keyword>
<keyword id="KW-0472">Membrane</keyword>
<keyword id="KW-0812">Transmembrane</keyword>
<keyword id="KW-1133">Transmembrane helix</keyword>
<evidence type="ECO:0000250" key="1"/>
<evidence type="ECO:0000255" key="2"/>
<evidence type="ECO:0000305" key="3"/>
<protein>
    <recommendedName>
        <fullName>Casparian strip membrane protein 1</fullName>
        <shortName>PtCASP1</shortName>
    </recommendedName>
</protein>
<dbReference type="EMBL" id="DR057783">
    <property type="status" value="NOT_ANNOTATED_CDS"/>
    <property type="molecule type" value="mRNA"/>
</dbReference>
<dbReference type="EMBL" id="CF667267">
    <property type="status" value="NOT_ANNOTATED_CDS"/>
    <property type="molecule type" value="mRNA"/>
</dbReference>
<dbReference type="EMBL" id="CF667350">
    <property type="status" value="NOT_ANNOTATED_CDS"/>
    <property type="molecule type" value="mRNA"/>
</dbReference>
<dbReference type="SMR" id="P0DH80"/>
<dbReference type="GO" id="GO:0005886">
    <property type="term" value="C:plasma membrane"/>
    <property type="evidence" value="ECO:0007669"/>
    <property type="project" value="UniProtKB-SubCell"/>
</dbReference>
<dbReference type="GO" id="GO:0071555">
    <property type="term" value="P:cell wall organization"/>
    <property type="evidence" value="ECO:0007669"/>
    <property type="project" value="UniProtKB-KW"/>
</dbReference>
<dbReference type="InterPro" id="IPR006459">
    <property type="entry name" value="CASP/CASPL"/>
</dbReference>
<dbReference type="InterPro" id="IPR006702">
    <property type="entry name" value="CASP_dom"/>
</dbReference>
<dbReference type="InterPro" id="IPR044173">
    <property type="entry name" value="CASPL"/>
</dbReference>
<dbReference type="NCBIfam" id="TIGR01569">
    <property type="entry name" value="A_tha_TIGR01569"/>
    <property type="match status" value="1"/>
</dbReference>
<dbReference type="PANTHER" id="PTHR36488:SF11">
    <property type="entry name" value="CASP-LIKE PROTEIN"/>
    <property type="match status" value="1"/>
</dbReference>
<dbReference type="PANTHER" id="PTHR36488">
    <property type="entry name" value="CASP-LIKE PROTEIN 1U1"/>
    <property type="match status" value="1"/>
</dbReference>
<dbReference type="Pfam" id="PF04535">
    <property type="entry name" value="CASP_dom"/>
    <property type="match status" value="1"/>
</dbReference>
<comment type="function">
    <text evidence="1">Regulates membrane-cell wall junctions and localized cell wall deposition. Required for establishment of the Casparian strip membrane domain (CSD) and the subsequent formation of Casparian strips, a cell wall modification of the root endodermis that determines an apoplastic barrier between the intraorganismal apoplasm and the extraorganismal apoplasm and prevents lateral diffusion (By similarity).</text>
</comment>
<comment type="subunit">
    <text evidence="1">Homodimer and heterodimers.</text>
</comment>
<comment type="subcellular location">
    <subcellularLocation>
        <location evidence="1">Cell membrane</location>
        <topology evidence="1">Multi-pass membrane protein</topology>
    </subcellularLocation>
    <text evidence="1">Very restricted localization following a belt shape within the plasma membrane which coincides with the position of the Casparian strip membrane domain in the root endodermis.</text>
</comment>
<comment type="similarity">
    <text evidence="3">Belongs to the Casparian strip membrane proteins (CASP) family.</text>
</comment>
<name>CASP1_PINTA</name>
<organism>
    <name type="scientific">Pinus taeda</name>
    <name type="common">Loblolly pine</name>
    <dbReference type="NCBI Taxonomy" id="3352"/>
    <lineage>
        <taxon>Eukaryota</taxon>
        <taxon>Viridiplantae</taxon>
        <taxon>Streptophyta</taxon>
        <taxon>Embryophyta</taxon>
        <taxon>Tracheophyta</taxon>
        <taxon>Spermatophyta</taxon>
        <taxon>Pinopsida</taxon>
        <taxon>Pinidae</taxon>
        <taxon>Conifers I</taxon>
        <taxon>Pinales</taxon>
        <taxon>Pinaceae</taxon>
        <taxon>Pinus</taxon>
        <taxon>Pinus subgen. Pinus</taxon>
    </lineage>
</organism>
<accession>P0DH80</accession>
<proteinExistence type="evidence at transcript level"/>
<reference key="1">
    <citation type="submission" date="2005-06" db="EMBL/GenBank/DDBJ databases">
        <title>An EST database from nitrogen-deficient loblolly pine (Pinus taeda) roots.</title>
        <authorList>
            <person name="Pratt L."/>
            <person name="Cordonnier-Pratt M.-M."/>
            <person name="Lorenz W.W."/>
            <person name="Zimmermann C."/>
            <person name="Dean J.F.D."/>
        </authorList>
    </citation>
    <scope>NUCLEOTIDE SEQUENCE [LARGE SCALE MRNA]</scope>
    <source>
        <tissue>Root</tissue>
    </source>
</reference>
<reference key="2">
    <citation type="submission" date="2003-10" db="EMBL/GenBank/DDBJ databases">
        <title>An EST database from untreated loblolly pine (Pinus taeda) roots.</title>
        <authorList>
            <person name="Pratt L."/>
            <person name="Cordonnier-Pratt M.-M."/>
            <person name="Lorenz W.W."/>
            <person name="Zimmermann C."/>
            <person name="Dean J.F.D."/>
        </authorList>
    </citation>
    <scope>NUCLEOTIDE SEQUENCE [LARGE SCALE MRNA] OF 8-190</scope>
    <source>
        <tissue>Root</tissue>
    </source>
</reference>
<reference key="3">
    <citation type="journal article" date="2014" name="Plant Physiol.">
        <title>Functional and evolutionary analysis of the CASPARIAN STRIP MEMBRANE DOMAIN PROTEIN family.</title>
        <authorList>
            <person name="Roppolo D."/>
            <person name="Boeckmann B."/>
            <person name="Pfister A."/>
            <person name="Boutet E."/>
            <person name="Rubio M.C."/>
            <person name="Denervaud-Tendon V."/>
            <person name="Vermeer J.E."/>
            <person name="Gheyselinck J."/>
            <person name="Xenarios I."/>
            <person name="Geldner N."/>
        </authorList>
    </citation>
    <scope>GENE FAMILY</scope>
    <scope>NOMENCLATURE</scope>
</reference>
<feature type="chain" id="PRO_0000412208" description="Casparian strip membrane protein 1">
    <location>
        <begin position="1"/>
        <end position="190"/>
    </location>
</feature>
<feature type="topological domain" description="Cytoplasmic" evidence="2">
    <location>
        <begin position="1"/>
        <end position="24"/>
    </location>
</feature>
<feature type="transmembrane region" description="Helical" evidence="2">
    <location>
        <begin position="25"/>
        <end position="45"/>
    </location>
</feature>
<feature type="topological domain" description="Extracellular" evidence="2">
    <location>
        <begin position="46"/>
        <end position="72"/>
    </location>
</feature>
<feature type="transmembrane region" description="Helical" evidence="2">
    <location>
        <begin position="73"/>
        <end position="93"/>
    </location>
</feature>
<feature type="topological domain" description="Cytoplasmic" evidence="2">
    <location>
        <begin position="94"/>
        <end position="107"/>
    </location>
</feature>
<feature type="transmembrane region" description="Helical" evidence="2">
    <location>
        <begin position="108"/>
        <end position="128"/>
    </location>
</feature>
<feature type="topological domain" description="Extracellular" evidence="2">
    <location>
        <begin position="129"/>
        <end position="157"/>
    </location>
</feature>
<feature type="transmembrane region" description="Helical" evidence="2">
    <location>
        <begin position="158"/>
        <end position="178"/>
    </location>
</feature>
<feature type="topological domain" description="Cytoplasmic" evidence="2">
    <location>
        <begin position="179"/>
        <end position="190"/>
    </location>
</feature>
<feature type="glycosylation site" description="N-linked (GlcNAc...) asparagine" evidence="2">
    <location>
        <position position="51"/>
    </location>
</feature>
<feature type="glycosylation site" description="N-linked (GlcNAc...) asparagine" evidence="2">
    <location>
        <position position="69"/>
    </location>
</feature>
<feature type="sequence conflict" description="In Ref. 2; CF667350." evidence="3" ref="2">
    <original>LP</original>
    <variation>VF</variation>
    <location>
        <begin position="14"/>
        <end position="15"/>
    </location>
</feature>
<feature type="sequence conflict" description="In Ref. 2; CF667267/CF667350." evidence="3" ref="2">
    <original>D</original>
    <variation>E</variation>
    <location>
        <position position="189"/>
    </location>
</feature>